<sequence>MRRIAVMGAAGRMGKILVEAVQQRAPLTGLTAAIVRPGSTLIGVDAGELASLGRIGVPLSGNLESVAEEFDVLIDFTLPEVMLKNLAFCRKAGKAMVIGTTGLDAAQKQLLAEAGKDIPIVFAANFSVGVNLSLKLLDMAARVLAEDADIEIIEAHHRHKIDAPSGTALRMGEVIANALDRDLQKVAVYGREGHTGARERETIGFATVRGGDVVGDHTVLFACEGERLEITHKASSRMTFAKGAVRAALWLDAREPGLYDMQDVLGLH</sequence>
<protein>
    <recommendedName>
        <fullName evidence="1">4-hydroxy-tetrahydrodipicolinate reductase</fullName>
        <shortName evidence="1">HTPA reductase</shortName>
        <ecNumber evidence="1">1.17.1.8</ecNumber>
    </recommendedName>
</protein>
<name>DAPB_PSEPF</name>
<comment type="function">
    <text evidence="1">Catalyzes the conversion of 4-hydroxy-tetrahydrodipicolinate (HTPA) to tetrahydrodipicolinate.</text>
</comment>
<comment type="catalytic activity">
    <reaction evidence="1">
        <text>(S)-2,3,4,5-tetrahydrodipicolinate + NAD(+) + H2O = (2S,4S)-4-hydroxy-2,3,4,5-tetrahydrodipicolinate + NADH + H(+)</text>
        <dbReference type="Rhea" id="RHEA:35323"/>
        <dbReference type="ChEBI" id="CHEBI:15377"/>
        <dbReference type="ChEBI" id="CHEBI:15378"/>
        <dbReference type="ChEBI" id="CHEBI:16845"/>
        <dbReference type="ChEBI" id="CHEBI:57540"/>
        <dbReference type="ChEBI" id="CHEBI:57945"/>
        <dbReference type="ChEBI" id="CHEBI:67139"/>
        <dbReference type="EC" id="1.17.1.8"/>
    </reaction>
</comment>
<comment type="catalytic activity">
    <reaction evidence="1">
        <text>(S)-2,3,4,5-tetrahydrodipicolinate + NADP(+) + H2O = (2S,4S)-4-hydroxy-2,3,4,5-tetrahydrodipicolinate + NADPH + H(+)</text>
        <dbReference type="Rhea" id="RHEA:35331"/>
        <dbReference type="ChEBI" id="CHEBI:15377"/>
        <dbReference type="ChEBI" id="CHEBI:15378"/>
        <dbReference type="ChEBI" id="CHEBI:16845"/>
        <dbReference type="ChEBI" id="CHEBI:57783"/>
        <dbReference type="ChEBI" id="CHEBI:58349"/>
        <dbReference type="ChEBI" id="CHEBI:67139"/>
        <dbReference type="EC" id="1.17.1.8"/>
    </reaction>
</comment>
<comment type="pathway">
    <text evidence="1">Amino-acid biosynthesis; L-lysine biosynthesis via DAP pathway; (S)-tetrahydrodipicolinate from L-aspartate: step 4/4.</text>
</comment>
<comment type="subcellular location">
    <subcellularLocation>
        <location evidence="1">Cytoplasm</location>
    </subcellularLocation>
</comment>
<comment type="similarity">
    <text evidence="1">Belongs to the DapB family.</text>
</comment>
<comment type="caution">
    <text evidence="2">Was originally thought to be a dihydrodipicolinate reductase (DHDPR), catalyzing the conversion of dihydrodipicolinate to tetrahydrodipicolinate. However, it was shown in E.coli that the substrate of the enzymatic reaction is not dihydrodipicolinate (DHDP) but in fact (2S,4S)-4-hydroxy-2,3,4,5-tetrahydrodipicolinic acid (HTPA), the product released by the DapA-catalyzed reaction.</text>
</comment>
<accession>Q3KI98</accession>
<reference key="1">
    <citation type="journal article" date="2009" name="Genome Biol.">
        <title>Genomic and genetic analyses of diversity and plant interactions of Pseudomonas fluorescens.</title>
        <authorList>
            <person name="Silby M.W."/>
            <person name="Cerdeno-Tarraga A.M."/>
            <person name="Vernikos G.S."/>
            <person name="Giddens S.R."/>
            <person name="Jackson R.W."/>
            <person name="Preston G.M."/>
            <person name="Zhang X.-X."/>
            <person name="Moon C.D."/>
            <person name="Gehrig S.M."/>
            <person name="Godfrey S.A.C."/>
            <person name="Knight C.G."/>
            <person name="Malone J.G."/>
            <person name="Robinson Z."/>
            <person name="Spiers A.J."/>
            <person name="Harris S."/>
            <person name="Challis G.L."/>
            <person name="Yaxley A.M."/>
            <person name="Harris D."/>
            <person name="Seeger K."/>
            <person name="Murphy L."/>
            <person name="Rutter S."/>
            <person name="Squares R."/>
            <person name="Quail M.A."/>
            <person name="Saunders E."/>
            <person name="Mavromatis K."/>
            <person name="Brettin T.S."/>
            <person name="Bentley S.D."/>
            <person name="Hothersall J."/>
            <person name="Stephens E."/>
            <person name="Thomas C.M."/>
            <person name="Parkhill J."/>
            <person name="Levy S.B."/>
            <person name="Rainey P.B."/>
            <person name="Thomson N.R."/>
        </authorList>
    </citation>
    <scope>NUCLEOTIDE SEQUENCE [LARGE SCALE GENOMIC DNA]</scope>
    <source>
        <strain>Pf0-1</strain>
    </source>
</reference>
<gene>
    <name evidence="1" type="primary">dapB</name>
    <name type="ordered locus">Pfl01_0765</name>
</gene>
<organism>
    <name type="scientific">Pseudomonas fluorescens (strain Pf0-1)</name>
    <dbReference type="NCBI Taxonomy" id="205922"/>
    <lineage>
        <taxon>Bacteria</taxon>
        <taxon>Pseudomonadati</taxon>
        <taxon>Pseudomonadota</taxon>
        <taxon>Gammaproteobacteria</taxon>
        <taxon>Pseudomonadales</taxon>
        <taxon>Pseudomonadaceae</taxon>
        <taxon>Pseudomonas</taxon>
    </lineage>
</organism>
<keyword id="KW-0028">Amino-acid biosynthesis</keyword>
<keyword id="KW-0963">Cytoplasm</keyword>
<keyword id="KW-0220">Diaminopimelate biosynthesis</keyword>
<keyword id="KW-0457">Lysine biosynthesis</keyword>
<keyword id="KW-0520">NAD</keyword>
<keyword id="KW-0521">NADP</keyword>
<keyword id="KW-0560">Oxidoreductase</keyword>
<proteinExistence type="inferred from homology"/>
<dbReference type="EC" id="1.17.1.8" evidence="1"/>
<dbReference type="EMBL" id="CP000094">
    <property type="protein sequence ID" value="ABA72508.1"/>
    <property type="molecule type" value="Genomic_DNA"/>
</dbReference>
<dbReference type="RefSeq" id="WP_011332397.1">
    <property type="nucleotide sequence ID" value="NC_007492.2"/>
</dbReference>
<dbReference type="SMR" id="Q3KI98"/>
<dbReference type="KEGG" id="pfo:Pfl01_0765"/>
<dbReference type="eggNOG" id="COG0289">
    <property type="taxonomic scope" value="Bacteria"/>
</dbReference>
<dbReference type="HOGENOM" id="CLU_047479_2_1_6"/>
<dbReference type="UniPathway" id="UPA00034">
    <property type="reaction ID" value="UER00018"/>
</dbReference>
<dbReference type="Proteomes" id="UP000002704">
    <property type="component" value="Chromosome"/>
</dbReference>
<dbReference type="GO" id="GO:0005829">
    <property type="term" value="C:cytosol"/>
    <property type="evidence" value="ECO:0007669"/>
    <property type="project" value="TreeGrafter"/>
</dbReference>
<dbReference type="GO" id="GO:0008839">
    <property type="term" value="F:4-hydroxy-tetrahydrodipicolinate reductase"/>
    <property type="evidence" value="ECO:0007669"/>
    <property type="project" value="UniProtKB-EC"/>
</dbReference>
<dbReference type="GO" id="GO:0051287">
    <property type="term" value="F:NAD binding"/>
    <property type="evidence" value="ECO:0007669"/>
    <property type="project" value="UniProtKB-UniRule"/>
</dbReference>
<dbReference type="GO" id="GO:0050661">
    <property type="term" value="F:NADP binding"/>
    <property type="evidence" value="ECO:0007669"/>
    <property type="project" value="UniProtKB-UniRule"/>
</dbReference>
<dbReference type="GO" id="GO:0016726">
    <property type="term" value="F:oxidoreductase activity, acting on CH or CH2 groups, NAD or NADP as acceptor"/>
    <property type="evidence" value="ECO:0007669"/>
    <property type="project" value="UniProtKB-UniRule"/>
</dbReference>
<dbReference type="GO" id="GO:0019877">
    <property type="term" value="P:diaminopimelate biosynthetic process"/>
    <property type="evidence" value="ECO:0007669"/>
    <property type="project" value="UniProtKB-UniRule"/>
</dbReference>
<dbReference type="GO" id="GO:0009089">
    <property type="term" value="P:lysine biosynthetic process via diaminopimelate"/>
    <property type="evidence" value="ECO:0007669"/>
    <property type="project" value="UniProtKB-UniRule"/>
</dbReference>
<dbReference type="CDD" id="cd02274">
    <property type="entry name" value="DHDPR_N"/>
    <property type="match status" value="1"/>
</dbReference>
<dbReference type="FunFam" id="3.30.360.10:FF:000004">
    <property type="entry name" value="4-hydroxy-tetrahydrodipicolinate reductase"/>
    <property type="match status" value="1"/>
</dbReference>
<dbReference type="FunFam" id="3.40.50.720:FF:000048">
    <property type="entry name" value="4-hydroxy-tetrahydrodipicolinate reductase"/>
    <property type="match status" value="1"/>
</dbReference>
<dbReference type="Gene3D" id="3.30.360.10">
    <property type="entry name" value="Dihydrodipicolinate Reductase, domain 2"/>
    <property type="match status" value="1"/>
</dbReference>
<dbReference type="Gene3D" id="3.40.50.720">
    <property type="entry name" value="NAD(P)-binding Rossmann-like Domain"/>
    <property type="match status" value="1"/>
</dbReference>
<dbReference type="HAMAP" id="MF_00102">
    <property type="entry name" value="DapB"/>
    <property type="match status" value="1"/>
</dbReference>
<dbReference type="InterPro" id="IPR022663">
    <property type="entry name" value="DapB_C"/>
</dbReference>
<dbReference type="InterPro" id="IPR000846">
    <property type="entry name" value="DapB_N"/>
</dbReference>
<dbReference type="InterPro" id="IPR022664">
    <property type="entry name" value="DapB_N_CS"/>
</dbReference>
<dbReference type="InterPro" id="IPR023940">
    <property type="entry name" value="DHDPR_bac"/>
</dbReference>
<dbReference type="InterPro" id="IPR036291">
    <property type="entry name" value="NAD(P)-bd_dom_sf"/>
</dbReference>
<dbReference type="NCBIfam" id="TIGR00036">
    <property type="entry name" value="dapB"/>
    <property type="match status" value="1"/>
</dbReference>
<dbReference type="PANTHER" id="PTHR20836:SF0">
    <property type="entry name" value="4-HYDROXY-TETRAHYDRODIPICOLINATE REDUCTASE 1, CHLOROPLASTIC-RELATED"/>
    <property type="match status" value="1"/>
</dbReference>
<dbReference type="PANTHER" id="PTHR20836">
    <property type="entry name" value="DIHYDRODIPICOLINATE REDUCTASE"/>
    <property type="match status" value="1"/>
</dbReference>
<dbReference type="Pfam" id="PF05173">
    <property type="entry name" value="DapB_C"/>
    <property type="match status" value="1"/>
</dbReference>
<dbReference type="Pfam" id="PF01113">
    <property type="entry name" value="DapB_N"/>
    <property type="match status" value="1"/>
</dbReference>
<dbReference type="PIRSF" id="PIRSF000161">
    <property type="entry name" value="DHPR"/>
    <property type="match status" value="1"/>
</dbReference>
<dbReference type="SUPFAM" id="SSF55347">
    <property type="entry name" value="Glyceraldehyde-3-phosphate dehydrogenase-like, C-terminal domain"/>
    <property type="match status" value="1"/>
</dbReference>
<dbReference type="SUPFAM" id="SSF51735">
    <property type="entry name" value="NAD(P)-binding Rossmann-fold domains"/>
    <property type="match status" value="1"/>
</dbReference>
<dbReference type="PROSITE" id="PS01298">
    <property type="entry name" value="DAPB"/>
    <property type="match status" value="1"/>
</dbReference>
<evidence type="ECO:0000255" key="1">
    <source>
        <dbReference type="HAMAP-Rule" id="MF_00102"/>
    </source>
</evidence>
<evidence type="ECO:0000305" key="2"/>
<feature type="chain" id="PRO_0000228375" description="4-hydroxy-tetrahydrodipicolinate reductase">
    <location>
        <begin position="1"/>
        <end position="268"/>
    </location>
</feature>
<feature type="active site" description="Proton donor/acceptor" evidence="1">
    <location>
        <position position="156"/>
    </location>
</feature>
<feature type="active site" description="Proton donor" evidence="1">
    <location>
        <position position="160"/>
    </location>
</feature>
<feature type="binding site" evidence="1">
    <location>
        <begin position="8"/>
        <end position="13"/>
    </location>
    <ligand>
        <name>NAD(+)</name>
        <dbReference type="ChEBI" id="CHEBI:57540"/>
    </ligand>
</feature>
<feature type="binding site" evidence="1">
    <location>
        <position position="36"/>
    </location>
    <ligand>
        <name>NADP(+)</name>
        <dbReference type="ChEBI" id="CHEBI:58349"/>
    </ligand>
</feature>
<feature type="binding site" evidence="1">
    <location>
        <begin position="99"/>
        <end position="101"/>
    </location>
    <ligand>
        <name>NAD(+)</name>
        <dbReference type="ChEBI" id="CHEBI:57540"/>
    </ligand>
</feature>
<feature type="binding site" evidence="1">
    <location>
        <begin position="123"/>
        <end position="126"/>
    </location>
    <ligand>
        <name>NAD(+)</name>
        <dbReference type="ChEBI" id="CHEBI:57540"/>
    </ligand>
</feature>
<feature type="binding site" evidence="1">
    <location>
        <position position="157"/>
    </location>
    <ligand>
        <name>(S)-2,3,4,5-tetrahydrodipicolinate</name>
        <dbReference type="ChEBI" id="CHEBI:16845"/>
    </ligand>
</feature>
<feature type="binding site" evidence="1">
    <location>
        <begin position="166"/>
        <end position="167"/>
    </location>
    <ligand>
        <name>(S)-2,3,4,5-tetrahydrodipicolinate</name>
        <dbReference type="ChEBI" id="CHEBI:16845"/>
    </ligand>
</feature>